<gene>
    <name evidence="1" type="primary">pus10</name>
    <name type="ordered locus">Vdis_0543</name>
</gene>
<name>PUS10_VULDI</name>
<accession>E1QUT8</accession>
<proteinExistence type="inferred from homology"/>
<reference key="1">
    <citation type="journal article" date="2010" name="Stand. Genomic Sci.">
        <title>Complete genome sequence of Vulcanisaeta distributa type strain (IC-017).</title>
        <authorList>
            <person name="Mavromatis K."/>
            <person name="Sikorski J."/>
            <person name="Pabst E."/>
            <person name="Teshima H."/>
            <person name="Lapidus A."/>
            <person name="Lucas S."/>
            <person name="Nolan M."/>
            <person name="Glavina Del Rio T."/>
            <person name="Cheng J.F."/>
            <person name="Bruce D."/>
            <person name="Goodwin L."/>
            <person name="Pitluck S."/>
            <person name="Liolios K."/>
            <person name="Ivanova N."/>
            <person name="Mikhailova N."/>
            <person name="Pati A."/>
            <person name="Chen A."/>
            <person name="Palaniappan K."/>
            <person name="Land M."/>
            <person name="Hauser L."/>
            <person name="Chang Y.J."/>
            <person name="Jeffries C.D."/>
            <person name="Rohde M."/>
            <person name="Spring S."/>
            <person name="Goeker M."/>
            <person name="Wirth R."/>
            <person name="Woyke T."/>
            <person name="Bristow J."/>
            <person name="Eisen J.A."/>
            <person name="Markowitz V."/>
            <person name="Hugenholtz P."/>
            <person name="Klenk H.P."/>
            <person name="Kyrpides N.C."/>
        </authorList>
    </citation>
    <scope>NUCLEOTIDE SEQUENCE [LARGE SCALE GENOMIC DNA]</scope>
    <source>
        <strain>DSM 14429 / JCM 11212 / NBRC 100878 / IC-017</strain>
    </source>
</reference>
<protein>
    <recommendedName>
        <fullName evidence="1">tRNA pseudouridine synthase Pus10</fullName>
        <ecNumber evidence="1">5.4.99.25</ecNumber>
    </recommendedName>
    <alternativeName>
        <fullName evidence="1">tRNA pseudouridine 54/55 synthase</fullName>
        <shortName evidence="1">Psi54/55 synthase</shortName>
    </alternativeName>
</protein>
<sequence>MSIERAMDILRKYPLCNHCLGRLFARLGTGLDNEERGRAIKDYLLMRIHERILNEGLSDELLNDVKALAVSGHEPSIKFLSNMGINVSPARCYVCGDTIFNRLNEWVNNIVNSLRSLGIEFRSFRLGSRVPLDIQNRELSITTEFNISSAESIKREINRELGKRVSAMLGVSFNREEPDVEVVIDVNTGSVEVQIMPIYISARYRKVHRLINEEGQVKWPIDRVIQAYNAQDVVIHTGGEDPMGVRVLGNGRPVILQVVKPSKRPDVNDVYALLKDSGYDIVLDNLSRVRASAVVKMKARVRDYVITYRVLAITDNSVTNENIKSLHDYFRNRQVVQVFRRGRRIRRRISMVYELDGRVIRDRLVEFLIRCQGNLYIRGFVHGGLGDVEPSIAGTLGFSVRPVEIDILNISD</sequence>
<evidence type="ECO:0000255" key="1">
    <source>
        <dbReference type="HAMAP-Rule" id="MF_01893"/>
    </source>
</evidence>
<dbReference type="EC" id="5.4.99.25" evidence="1"/>
<dbReference type="EMBL" id="CP002100">
    <property type="protein sequence ID" value="ADN49941.1"/>
    <property type="molecule type" value="Genomic_DNA"/>
</dbReference>
<dbReference type="RefSeq" id="WP_013335666.1">
    <property type="nucleotide sequence ID" value="NC_014537.1"/>
</dbReference>
<dbReference type="SMR" id="E1QUT8"/>
<dbReference type="STRING" id="572478.Vdis_0543"/>
<dbReference type="GeneID" id="9751463"/>
<dbReference type="KEGG" id="vdi:Vdis_0543"/>
<dbReference type="eggNOG" id="arCOG01015">
    <property type="taxonomic scope" value="Archaea"/>
</dbReference>
<dbReference type="HOGENOM" id="CLU_028780_2_0_2"/>
<dbReference type="OrthoDB" id="10348at2157"/>
<dbReference type="Proteomes" id="UP000006681">
    <property type="component" value="Chromosome"/>
</dbReference>
<dbReference type="GO" id="GO:0000049">
    <property type="term" value="F:tRNA binding"/>
    <property type="evidence" value="ECO:0007669"/>
    <property type="project" value="InterPro"/>
</dbReference>
<dbReference type="GO" id="GO:0160148">
    <property type="term" value="F:tRNA pseudouridine(55) synthase activity"/>
    <property type="evidence" value="ECO:0007669"/>
    <property type="project" value="UniProtKB-EC"/>
</dbReference>
<dbReference type="GO" id="GO:0031119">
    <property type="term" value="P:tRNA pseudouridine synthesis"/>
    <property type="evidence" value="ECO:0007669"/>
    <property type="project" value="UniProtKB-UniRule"/>
</dbReference>
<dbReference type="Gene3D" id="3.30.70.2510">
    <property type="match status" value="1"/>
</dbReference>
<dbReference type="Gene3D" id="3.30.70.3190">
    <property type="match status" value="1"/>
</dbReference>
<dbReference type="HAMAP" id="MF_01893">
    <property type="entry name" value="Pus10_arch"/>
    <property type="match status" value="1"/>
</dbReference>
<dbReference type="InterPro" id="IPR005912">
    <property type="entry name" value="Pus10"/>
</dbReference>
<dbReference type="InterPro" id="IPR039894">
    <property type="entry name" value="Pus10-like"/>
</dbReference>
<dbReference type="InterPro" id="IPR048741">
    <property type="entry name" value="Pus10-like_C"/>
</dbReference>
<dbReference type="InterPro" id="IPR055174">
    <property type="entry name" value="Pus10_THUMP_arc"/>
</dbReference>
<dbReference type="PANTHER" id="PTHR21568">
    <property type="entry name" value="TRNA PSEUDOURIDINE SYNTHASE PUS10"/>
    <property type="match status" value="1"/>
</dbReference>
<dbReference type="PANTHER" id="PTHR21568:SF0">
    <property type="entry name" value="TRNA PSEUDOURIDINE SYNTHASE PUS10"/>
    <property type="match status" value="1"/>
</dbReference>
<dbReference type="Pfam" id="PF21238">
    <property type="entry name" value="Pus10_C"/>
    <property type="match status" value="1"/>
</dbReference>
<dbReference type="Pfam" id="PF22023">
    <property type="entry name" value="Pus10_THUMP_arc"/>
    <property type="match status" value="1"/>
</dbReference>
<feature type="chain" id="PRO_0000407400" description="tRNA pseudouridine synthase Pus10">
    <location>
        <begin position="1"/>
        <end position="412"/>
    </location>
</feature>
<feature type="domain" description="THUMP" evidence="1">
    <location>
        <begin position="73"/>
        <end position="197"/>
    </location>
</feature>
<feature type="binding site" evidence="1">
    <location>
        <position position="308"/>
    </location>
    <ligand>
        <name>substrate</name>
    </ligand>
</feature>
<feature type="binding site" evidence="1">
    <location>
        <position position="376"/>
    </location>
    <ligand>
        <name>substrate</name>
    </ligand>
</feature>
<comment type="function">
    <text evidence="1">Responsible for synthesis of pseudouridine from uracil-54 and uracil-55 in the psi GC loop of transfer RNAs.</text>
</comment>
<comment type="catalytic activity">
    <reaction evidence="1">
        <text>uridine(54) in tRNA = pseudouridine(54) in tRNA</text>
        <dbReference type="Rhea" id="RHEA:57876"/>
        <dbReference type="Rhea" id="RHEA-COMP:10193"/>
        <dbReference type="Rhea" id="RHEA-COMP:14141"/>
        <dbReference type="ChEBI" id="CHEBI:65314"/>
        <dbReference type="ChEBI" id="CHEBI:65315"/>
    </reaction>
</comment>
<comment type="catalytic activity">
    <reaction evidence="1">
        <text>uridine(55) in tRNA = pseudouridine(55) in tRNA</text>
        <dbReference type="Rhea" id="RHEA:42532"/>
        <dbReference type="Rhea" id="RHEA-COMP:10101"/>
        <dbReference type="Rhea" id="RHEA-COMP:10102"/>
        <dbReference type="ChEBI" id="CHEBI:65314"/>
        <dbReference type="ChEBI" id="CHEBI:65315"/>
        <dbReference type="EC" id="5.4.99.25"/>
    </reaction>
</comment>
<comment type="similarity">
    <text evidence="1">Belongs to the pseudouridine synthase Pus10 family.</text>
</comment>
<organism>
    <name type="scientific">Vulcanisaeta distributa (strain DSM 14429 / JCM 11212 / NBRC 100878 / IC-017)</name>
    <dbReference type="NCBI Taxonomy" id="572478"/>
    <lineage>
        <taxon>Archaea</taxon>
        <taxon>Thermoproteota</taxon>
        <taxon>Thermoprotei</taxon>
        <taxon>Thermoproteales</taxon>
        <taxon>Thermoproteaceae</taxon>
        <taxon>Vulcanisaeta</taxon>
    </lineage>
</organism>
<keyword id="KW-0413">Isomerase</keyword>
<keyword id="KW-1185">Reference proteome</keyword>
<keyword id="KW-0694">RNA-binding</keyword>
<keyword id="KW-0819">tRNA processing</keyword>